<sequence>MQFSKMHGLGNDFMVVDAVTQNVFFSPELIRRLSDRHLGVGFDQLLVVEPPYDPELDFHYRIFNADGSEVSQCGNGARCFARFVRLKGLTNKRDIRVSTANGRMVLSVTEDELVRVNMGEPNFEPAQVPFRANKAEKTYIMRAAEQTILCGVVSMGNPHCVIQVDNVDTAAVETLGPVLESHERFPERANIGFMQVVRREHIRLRVYERGAGETRACGSGACAAVAVGIQQGLLAEEVRVELPGGRLDIAWKGPGHPLYMTGPAAHIYDGFIHL</sequence>
<organism>
    <name type="scientific">Salmonella schwarzengrund (strain CVM19633)</name>
    <dbReference type="NCBI Taxonomy" id="439843"/>
    <lineage>
        <taxon>Bacteria</taxon>
        <taxon>Pseudomonadati</taxon>
        <taxon>Pseudomonadota</taxon>
        <taxon>Gammaproteobacteria</taxon>
        <taxon>Enterobacterales</taxon>
        <taxon>Enterobacteriaceae</taxon>
        <taxon>Salmonella</taxon>
    </lineage>
</organism>
<proteinExistence type="inferred from homology"/>
<comment type="function">
    <text evidence="1">Catalyzes the stereoinversion of LL-2,6-diaminopimelate (L,L-DAP) to meso-diaminopimelate (meso-DAP), a precursor of L-lysine and an essential component of the bacterial peptidoglycan.</text>
</comment>
<comment type="catalytic activity">
    <reaction evidence="1">
        <text>(2S,6S)-2,6-diaminopimelate = meso-2,6-diaminopimelate</text>
        <dbReference type="Rhea" id="RHEA:15393"/>
        <dbReference type="ChEBI" id="CHEBI:57609"/>
        <dbReference type="ChEBI" id="CHEBI:57791"/>
        <dbReference type="EC" id="5.1.1.7"/>
    </reaction>
</comment>
<comment type="pathway">
    <text evidence="1">Amino-acid biosynthesis; L-lysine biosynthesis via DAP pathway; DL-2,6-diaminopimelate from LL-2,6-diaminopimelate: step 1/1.</text>
</comment>
<comment type="subunit">
    <text evidence="1">Homodimer.</text>
</comment>
<comment type="subcellular location">
    <subcellularLocation>
        <location evidence="1">Cytoplasm</location>
    </subcellularLocation>
</comment>
<comment type="similarity">
    <text evidence="1">Belongs to the diaminopimelate epimerase family.</text>
</comment>
<name>DAPF_SALSV</name>
<dbReference type="EC" id="5.1.1.7" evidence="1"/>
<dbReference type="EMBL" id="CP001127">
    <property type="protein sequence ID" value="ACF89897.1"/>
    <property type="molecule type" value="Genomic_DNA"/>
</dbReference>
<dbReference type="RefSeq" id="WP_001160671.1">
    <property type="nucleotide sequence ID" value="NC_011094.1"/>
</dbReference>
<dbReference type="SMR" id="B4TNV9"/>
<dbReference type="KEGG" id="sew:SeSA_A4157"/>
<dbReference type="HOGENOM" id="CLU_053306_1_1_6"/>
<dbReference type="UniPathway" id="UPA00034">
    <property type="reaction ID" value="UER00025"/>
</dbReference>
<dbReference type="Proteomes" id="UP000001865">
    <property type="component" value="Chromosome"/>
</dbReference>
<dbReference type="GO" id="GO:0005829">
    <property type="term" value="C:cytosol"/>
    <property type="evidence" value="ECO:0007669"/>
    <property type="project" value="TreeGrafter"/>
</dbReference>
<dbReference type="GO" id="GO:0008837">
    <property type="term" value="F:diaminopimelate epimerase activity"/>
    <property type="evidence" value="ECO:0007669"/>
    <property type="project" value="UniProtKB-UniRule"/>
</dbReference>
<dbReference type="GO" id="GO:0009089">
    <property type="term" value="P:lysine biosynthetic process via diaminopimelate"/>
    <property type="evidence" value="ECO:0007669"/>
    <property type="project" value="UniProtKB-UniRule"/>
</dbReference>
<dbReference type="FunFam" id="3.10.310.10:FF:000001">
    <property type="entry name" value="Diaminopimelate epimerase"/>
    <property type="match status" value="1"/>
</dbReference>
<dbReference type="FunFam" id="3.10.310.10:FF:000002">
    <property type="entry name" value="Diaminopimelate epimerase"/>
    <property type="match status" value="1"/>
</dbReference>
<dbReference type="Gene3D" id="3.10.310.10">
    <property type="entry name" value="Diaminopimelate Epimerase, Chain A, domain 1"/>
    <property type="match status" value="2"/>
</dbReference>
<dbReference type="HAMAP" id="MF_00197">
    <property type="entry name" value="DAP_epimerase"/>
    <property type="match status" value="1"/>
</dbReference>
<dbReference type="InterPro" id="IPR018510">
    <property type="entry name" value="DAP_epimerase_AS"/>
</dbReference>
<dbReference type="InterPro" id="IPR001653">
    <property type="entry name" value="DAP_epimerase_DapF"/>
</dbReference>
<dbReference type="NCBIfam" id="TIGR00652">
    <property type="entry name" value="DapF"/>
    <property type="match status" value="1"/>
</dbReference>
<dbReference type="PANTHER" id="PTHR31689:SF0">
    <property type="entry name" value="DIAMINOPIMELATE EPIMERASE"/>
    <property type="match status" value="1"/>
</dbReference>
<dbReference type="PANTHER" id="PTHR31689">
    <property type="entry name" value="DIAMINOPIMELATE EPIMERASE, CHLOROPLASTIC"/>
    <property type="match status" value="1"/>
</dbReference>
<dbReference type="Pfam" id="PF01678">
    <property type="entry name" value="DAP_epimerase"/>
    <property type="match status" value="2"/>
</dbReference>
<dbReference type="SUPFAM" id="SSF54506">
    <property type="entry name" value="Diaminopimelate epimerase-like"/>
    <property type="match status" value="1"/>
</dbReference>
<dbReference type="PROSITE" id="PS01326">
    <property type="entry name" value="DAP_EPIMERASE"/>
    <property type="match status" value="1"/>
</dbReference>
<reference key="1">
    <citation type="journal article" date="2011" name="J. Bacteriol.">
        <title>Comparative genomics of 28 Salmonella enterica isolates: evidence for CRISPR-mediated adaptive sublineage evolution.</title>
        <authorList>
            <person name="Fricke W.F."/>
            <person name="Mammel M.K."/>
            <person name="McDermott P.F."/>
            <person name="Tartera C."/>
            <person name="White D.G."/>
            <person name="Leclerc J.E."/>
            <person name="Ravel J."/>
            <person name="Cebula T.A."/>
        </authorList>
    </citation>
    <scope>NUCLEOTIDE SEQUENCE [LARGE SCALE GENOMIC DNA]</scope>
    <source>
        <strain>CVM19633</strain>
    </source>
</reference>
<evidence type="ECO:0000255" key="1">
    <source>
        <dbReference type="HAMAP-Rule" id="MF_00197"/>
    </source>
</evidence>
<protein>
    <recommendedName>
        <fullName evidence="1">Diaminopimelate epimerase</fullName>
        <shortName evidence="1">DAP epimerase</shortName>
        <ecNumber evidence="1">5.1.1.7</ecNumber>
    </recommendedName>
    <alternativeName>
        <fullName evidence="1">PLP-independent amino acid racemase</fullName>
    </alternativeName>
</protein>
<gene>
    <name evidence="1" type="primary">dapF</name>
    <name type="ordered locus">SeSA_A4157</name>
</gene>
<keyword id="KW-0028">Amino-acid biosynthesis</keyword>
<keyword id="KW-0963">Cytoplasm</keyword>
<keyword id="KW-0413">Isomerase</keyword>
<keyword id="KW-0457">Lysine biosynthesis</keyword>
<feature type="chain" id="PRO_1000099266" description="Diaminopimelate epimerase">
    <location>
        <begin position="1"/>
        <end position="274"/>
    </location>
</feature>
<feature type="active site" description="Proton donor" evidence="1">
    <location>
        <position position="73"/>
    </location>
</feature>
<feature type="active site" description="Proton acceptor" evidence="1">
    <location>
        <position position="217"/>
    </location>
</feature>
<feature type="binding site" evidence="1">
    <location>
        <position position="11"/>
    </location>
    <ligand>
        <name>substrate</name>
    </ligand>
</feature>
<feature type="binding site" evidence="1">
    <location>
        <position position="44"/>
    </location>
    <ligand>
        <name>substrate</name>
    </ligand>
</feature>
<feature type="binding site" evidence="1">
    <location>
        <position position="64"/>
    </location>
    <ligand>
        <name>substrate</name>
    </ligand>
</feature>
<feature type="binding site" evidence="1">
    <location>
        <begin position="74"/>
        <end position="75"/>
    </location>
    <ligand>
        <name>substrate</name>
    </ligand>
</feature>
<feature type="binding site" evidence="1">
    <location>
        <position position="157"/>
    </location>
    <ligand>
        <name>substrate</name>
    </ligand>
</feature>
<feature type="binding site" evidence="1">
    <location>
        <position position="190"/>
    </location>
    <ligand>
        <name>substrate</name>
    </ligand>
</feature>
<feature type="binding site" evidence="1">
    <location>
        <begin position="208"/>
        <end position="209"/>
    </location>
    <ligand>
        <name>substrate</name>
    </ligand>
</feature>
<feature type="binding site" evidence="1">
    <location>
        <begin position="218"/>
        <end position="219"/>
    </location>
    <ligand>
        <name>substrate</name>
    </ligand>
</feature>
<feature type="site" description="Could be important to modulate the pK values of the two catalytic cysteine residues" evidence="1">
    <location>
        <position position="159"/>
    </location>
</feature>
<feature type="site" description="Could be important to modulate the pK values of the two catalytic cysteine residues" evidence="1">
    <location>
        <position position="208"/>
    </location>
</feature>
<feature type="site" description="Important for dimerization" evidence="1">
    <location>
        <position position="268"/>
    </location>
</feature>
<accession>B4TNV9</accession>